<gene>
    <name evidence="2" type="primary">rpsL</name>
    <name type="ordered locus">cauri_0376</name>
</gene>
<proteinExistence type="inferred from homology"/>
<name>RS12_CORA7</name>
<dbReference type="EMBL" id="CP001601">
    <property type="protein sequence ID" value="ACP31975.1"/>
    <property type="molecule type" value="Genomic_DNA"/>
</dbReference>
<dbReference type="RefSeq" id="WP_010189693.1">
    <property type="nucleotide sequence ID" value="NZ_ACLH01000068.1"/>
</dbReference>
<dbReference type="SMR" id="C3PKN9"/>
<dbReference type="STRING" id="548476.cauri_0376"/>
<dbReference type="GeneID" id="31922995"/>
<dbReference type="KEGG" id="car:cauri_0376"/>
<dbReference type="eggNOG" id="COG0048">
    <property type="taxonomic scope" value="Bacteria"/>
</dbReference>
<dbReference type="HOGENOM" id="CLU_104295_1_2_11"/>
<dbReference type="OrthoDB" id="9802366at2"/>
<dbReference type="Proteomes" id="UP000002077">
    <property type="component" value="Chromosome"/>
</dbReference>
<dbReference type="GO" id="GO:0015935">
    <property type="term" value="C:small ribosomal subunit"/>
    <property type="evidence" value="ECO:0007669"/>
    <property type="project" value="InterPro"/>
</dbReference>
<dbReference type="GO" id="GO:0019843">
    <property type="term" value="F:rRNA binding"/>
    <property type="evidence" value="ECO:0007669"/>
    <property type="project" value="UniProtKB-UniRule"/>
</dbReference>
<dbReference type="GO" id="GO:0003735">
    <property type="term" value="F:structural constituent of ribosome"/>
    <property type="evidence" value="ECO:0007669"/>
    <property type="project" value="InterPro"/>
</dbReference>
<dbReference type="GO" id="GO:0000049">
    <property type="term" value="F:tRNA binding"/>
    <property type="evidence" value="ECO:0007669"/>
    <property type="project" value="UniProtKB-UniRule"/>
</dbReference>
<dbReference type="GO" id="GO:0006412">
    <property type="term" value="P:translation"/>
    <property type="evidence" value="ECO:0007669"/>
    <property type="project" value="UniProtKB-UniRule"/>
</dbReference>
<dbReference type="CDD" id="cd03368">
    <property type="entry name" value="Ribosomal_S12"/>
    <property type="match status" value="1"/>
</dbReference>
<dbReference type="FunFam" id="2.40.50.140:FF:000001">
    <property type="entry name" value="30S ribosomal protein S12"/>
    <property type="match status" value="1"/>
</dbReference>
<dbReference type="Gene3D" id="2.40.50.140">
    <property type="entry name" value="Nucleic acid-binding proteins"/>
    <property type="match status" value="1"/>
</dbReference>
<dbReference type="HAMAP" id="MF_00403_B">
    <property type="entry name" value="Ribosomal_uS12_B"/>
    <property type="match status" value="1"/>
</dbReference>
<dbReference type="InterPro" id="IPR012340">
    <property type="entry name" value="NA-bd_OB-fold"/>
</dbReference>
<dbReference type="InterPro" id="IPR006032">
    <property type="entry name" value="Ribosomal_uS12"/>
</dbReference>
<dbReference type="InterPro" id="IPR005679">
    <property type="entry name" value="Ribosomal_uS12_bac"/>
</dbReference>
<dbReference type="NCBIfam" id="TIGR00981">
    <property type="entry name" value="rpsL_bact"/>
    <property type="match status" value="1"/>
</dbReference>
<dbReference type="PANTHER" id="PTHR11652">
    <property type="entry name" value="30S RIBOSOMAL PROTEIN S12 FAMILY MEMBER"/>
    <property type="match status" value="1"/>
</dbReference>
<dbReference type="Pfam" id="PF00164">
    <property type="entry name" value="Ribosom_S12_S23"/>
    <property type="match status" value="1"/>
</dbReference>
<dbReference type="PIRSF" id="PIRSF002133">
    <property type="entry name" value="Ribosomal_S12/S23"/>
    <property type="match status" value="1"/>
</dbReference>
<dbReference type="PRINTS" id="PR01034">
    <property type="entry name" value="RIBOSOMALS12"/>
</dbReference>
<dbReference type="SUPFAM" id="SSF50249">
    <property type="entry name" value="Nucleic acid-binding proteins"/>
    <property type="match status" value="1"/>
</dbReference>
<dbReference type="PROSITE" id="PS00055">
    <property type="entry name" value="RIBOSOMAL_S12"/>
    <property type="match status" value="1"/>
</dbReference>
<reference key="1">
    <citation type="journal article" date="2010" name="BMC Genomics">
        <title>Complete genome sequence and lifestyle of black-pigmented Corynebacterium aurimucosum ATCC 700975 (formerly C. nigricans CN-1) isolated from a vaginal swab of a woman with spontaneous abortion.</title>
        <authorList>
            <person name="Trost E."/>
            <person name="Gotker S."/>
            <person name="Schneider J."/>
            <person name="Schneiker-Bekel S."/>
            <person name="Szczepanowski R."/>
            <person name="Tilker A."/>
            <person name="Viehoever P."/>
            <person name="Arnold W."/>
            <person name="Bekel T."/>
            <person name="Blom J."/>
            <person name="Gartemann K.H."/>
            <person name="Linke B."/>
            <person name="Goesmann A."/>
            <person name="Puhler A."/>
            <person name="Shukla S.K."/>
            <person name="Tauch A."/>
        </authorList>
    </citation>
    <scope>NUCLEOTIDE SEQUENCE [LARGE SCALE GENOMIC DNA]</scope>
    <source>
        <strain>ATCC 700975 / DSM 44827 / CIP 107346 / CN-1</strain>
    </source>
</reference>
<sequence length="123" mass="13543">MPTIQQLVRKGRHSKKAKVATAGLKGSPQRRGVCTRVYTTTPKKPNSALRKVARVRLTSGIEVSAYIPGEGHNLQEHSMVLVRGGRVKDLPGVRYKIIRGALDTQGVKDRKQARSRYGAKKGQ</sequence>
<accession>C3PKN9</accession>
<organism>
    <name type="scientific">Corynebacterium aurimucosum (strain ATCC 700975 / DSM 44827 / CIP 107346 / CN-1)</name>
    <name type="common">Corynebacterium nigricans</name>
    <dbReference type="NCBI Taxonomy" id="548476"/>
    <lineage>
        <taxon>Bacteria</taxon>
        <taxon>Bacillati</taxon>
        <taxon>Actinomycetota</taxon>
        <taxon>Actinomycetes</taxon>
        <taxon>Mycobacteriales</taxon>
        <taxon>Corynebacteriaceae</taxon>
        <taxon>Corynebacterium</taxon>
    </lineage>
</organism>
<keyword id="KW-0488">Methylation</keyword>
<keyword id="KW-1185">Reference proteome</keyword>
<keyword id="KW-0687">Ribonucleoprotein</keyword>
<keyword id="KW-0689">Ribosomal protein</keyword>
<keyword id="KW-0694">RNA-binding</keyword>
<keyword id="KW-0699">rRNA-binding</keyword>
<keyword id="KW-0820">tRNA-binding</keyword>
<protein>
    <recommendedName>
        <fullName evidence="2">Small ribosomal subunit protein uS12</fullName>
    </recommendedName>
    <alternativeName>
        <fullName evidence="4">30S ribosomal protein S12</fullName>
    </alternativeName>
</protein>
<feature type="chain" id="PRO_1000134627" description="Small ribosomal subunit protein uS12">
    <location>
        <begin position="1"/>
        <end position="123"/>
    </location>
</feature>
<feature type="region of interest" description="Disordered" evidence="3">
    <location>
        <begin position="1"/>
        <end position="31"/>
    </location>
</feature>
<feature type="compositionally biased region" description="Basic residues" evidence="3">
    <location>
        <begin position="9"/>
        <end position="18"/>
    </location>
</feature>
<feature type="modified residue" description="3-methylthioaspartic acid" evidence="1">
    <location>
        <position position="89"/>
    </location>
</feature>
<comment type="function">
    <text evidence="2">With S4 and S5 plays an important role in translational accuracy.</text>
</comment>
<comment type="function">
    <text evidence="2">Interacts with and stabilizes bases of the 16S rRNA that are involved in tRNA selection in the A site and with the mRNA backbone. Located at the interface of the 30S and 50S subunits, it traverses the body of the 30S subunit contacting proteins on the other side and probably holding the rRNA structure together. The combined cluster of proteins S8, S12 and S17 appears to hold together the shoulder and platform of the 30S subunit.</text>
</comment>
<comment type="subunit">
    <text evidence="2">Part of the 30S ribosomal subunit. Contacts proteins S8 and S17. May interact with IF1 in the 30S initiation complex.</text>
</comment>
<comment type="similarity">
    <text evidence="2">Belongs to the universal ribosomal protein uS12 family.</text>
</comment>
<evidence type="ECO:0000250" key="1"/>
<evidence type="ECO:0000255" key="2">
    <source>
        <dbReference type="HAMAP-Rule" id="MF_00403"/>
    </source>
</evidence>
<evidence type="ECO:0000256" key="3">
    <source>
        <dbReference type="SAM" id="MobiDB-lite"/>
    </source>
</evidence>
<evidence type="ECO:0000305" key="4"/>